<organism>
    <name type="scientific">Blochmanniella pennsylvanica (strain BPEN)</name>
    <dbReference type="NCBI Taxonomy" id="291272"/>
    <lineage>
        <taxon>Bacteria</taxon>
        <taxon>Pseudomonadati</taxon>
        <taxon>Pseudomonadota</taxon>
        <taxon>Gammaproteobacteria</taxon>
        <taxon>Enterobacterales</taxon>
        <taxon>Enterobacteriaceae</taxon>
        <taxon>ant endosymbionts</taxon>
        <taxon>Candidatus Blochmanniella</taxon>
    </lineage>
</organism>
<name>CORA_BLOPB</name>
<reference key="1">
    <citation type="journal article" date="2005" name="Genome Res.">
        <title>Genome sequence of Blochmannia pennsylvanicus indicates parallel evolutionary trends among bacterial mutualists of insects.</title>
        <authorList>
            <person name="Degnan P.H."/>
            <person name="Lazarus A.B."/>
            <person name="Wernegreen J.J."/>
        </authorList>
    </citation>
    <scope>NUCLEOTIDE SEQUENCE [LARGE SCALE GENOMIC DNA]</scope>
    <source>
        <strain>BPEN</strain>
    </source>
</reference>
<dbReference type="EMBL" id="CP000016">
    <property type="protein sequence ID" value="AAZ41203.1"/>
    <property type="molecule type" value="Genomic_DNA"/>
</dbReference>
<dbReference type="RefSeq" id="WP_011283114.1">
    <property type="nucleotide sequence ID" value="NC_007292.1"/>
</dbReference>
<dbReference type="SMR" id="Q491Z9"/>
<dbReference type="STRING" id="291272.BPEN_597"/>
<dbReference type="KEGG" id="bpn:BPEN_597"/>
<dbReference type="eggNOG" id="COG0598">
    <property type="taxonomic scope" value="Bacteria"/>
</dbReference>
<dbReference type="HOGENOM" id="CLU_007127_5_0_6"/>
<dbReference type="OrthoDB" id="9803416at2"/>
<dbReference type="Proteomes" id="UP000007794">
    <property type="component" value="Chromosome"/>
</dbReference>
<dbReference type="GO" id="GO:0005886">
    <property type="term" value="C:plasma membrane"/>
    <property type="evidence" value="ECO:0007669"/>
    <property type="project" value="UniProtKB-SubCell"/>
</dbReference>
<dbReference type="GO" id="GO:0015087">
    <property type="term" value="F:cobalt ion transmembrane transporter activity"/>
    <property type="evidence" value="ECO:0007669"/>
    <property type="project" value="InterPro"/>
</dbReference>
<dbReference type="GO" id="GO:0015095">
    <property type="term" value="F:magnesium ion transmembrane transporter activity"/>
    <property type="evidence" value="ECO:0007669"/>
    <property type="project" value="InterPro"/>
</dbReference>
<dbReference type="GO" id="GO:0015099">
    <property type="term" value="F:nickel cation transmembrane transporter activity"/>
    <property type="evidence" value="ECO:0007669"/>
    <property type="project" value="TreeGrafter"/>
</dbReference>
<dbReference type="FunFam" id="1.20.58.340:FF:000001">
    <property type="entry name" value="Magnesium transport protein CorA"/>
    <property type="match status" value="1"/>
</dbReference>
<dbReference type="Gene3D" id="1.20.58.340">
    <property type="entry name" value="Magnesium transport protein CorA, transmembrane region"/>
    <property type="match status" value="1"/>
</dbReference>
<dbReference type="InterPro" id="IPR045861">
    <property type="entry name" value="CorA_cytoplasmic_dom"/>
</dbReference>
<dbReference type="InterPro" id="IPR050829">
    <property type="entry name" value="CorA_MIT"/>
</dbReference>
<dbReference type="InterPro" id="IPR045863">
    <property type="entry name" value="CorA_TM1_TM2"/>
</dbReference>
<dbReference type="InterPro" id="IPR004488">
    <property type="entry name" value="Mg/Co-transport_prot_CorA"/>
</dbReference>
<dbReference type="InterPro" id="IPR002523">
    <property type="entry name" value="MgTranspt_CorA/ZnTranspt_ZntB"/>
</dbReference>
<dbReference type="NCBIfam" id="TIGR00383">
    <property type="entry name" value="corA"/>
    <property type="match status" value="1"/>
</dbReference>
<dbReference type="PANTHER" id="PTHR47685">
    <property type="entry name" value="MAGNESIUM TRANSPORT PROTEIN CORA"/>
    <property type="match status" value="1"/>
</dbReference>
<dbReference type="PANTHER" id="PTHR47685:SF1">
    <property type="entry name" value="MAGNESIUM TRANSPORT PROTEIN CORA"/>
    <property type="match status" value="1"/>
</dbReference>
<dbReference type="Pfam" id="PF01544">
    <property type="entry name" value="CorA"/>
    <property type="match status" value="1"/>
</dbReference>
<dbReference type="SUPFAM" id="SSF143865">
    <property type="entry name" value="CorA soluble domain-like"/>
    <property type="match status" value="1"/>
</dbReference>
<dbReference type="SUPFAM" id="SSF144083">
    <property type="entry name" value="Magnesium transport protein CorA, transmembrane region"/>
    <property type="match status" value="1"/>
</dbReference>
<protein>
    <recommendedName>
        <fullName>Magnesium transport protein CorA</fullName>
    </recommendedName>
</protein>
<keyword id="KW-0997">Cell inner membrane</keyword>
<keyword id="KW-1003">Cell membrane</keyword>
<keyword id="KW-0406">Ion transport</keyword>
<keyword id="KW-0460">Magnesium</keyword>
<keyword id="KW-0472">Membrane</keyword>
<keyword id="KW-1185">Reference proteome</keyword>
<keyword id="KW-0812">Transmembrane</keyword>
<keyword id="KW-1133">Transmembrane helix</keyword>
<keyword id="KW-0813">Transport</keyword>
<evidence type="ECO:0000250" key="1">
    <source>
        <dbReference type="UniProtKB" id="P0ABI4"/>
    </source>
</evidence>
<evidence type="ECO:0000250" key="2">
    <source>
        <dbReference type="UniProtKB" id="Q7VRM7"/>
    </source>
</evidence>
<evidence type="ECO:0000250" key="3">
    <source>
        <dbReference type="UniProtKB" id="Q9WZ31"/>
    </source>
</evidence>
<evidence type="ECO:0000255" key="4"/>
<evidence type="ECO:0000305" key="5"/>
<comment type="function">
    <text evidence="1 3">Mediates influx of magnesium ions (By similarity). Alternates between open and closed states. Activated by low cytoplasmic Mg(2+) levels. Inactive when cytoplasmic Mg(2+) levels are high (By similarity).</text>
</comment>
<comment type="catalytic activity">
    <reaction evidence="1">
        <text>Mg(2+)(in) = Mg(2+)(out)</text>
        <dbReference type="Rhea" id="RHEA:29827"/>
        <dbReference type="ChEBI" id="CHEBI:18420"/>
    </reaction>
</comment>
<comment type="subunit">
    <text evidence="3">Homopentamer. In the absence of Mg(2+), interactions between subunits are weakened, and dimers, trimers and tetramers can be observed in vitro (By similarity).</text>
</comment>
<comment type="subcellular location">
    <subcellularLocation>
        <location evidence="2">Cell inner membrane</location>
        <topology evidence="3">Multi-pass membrane protein</topology>
    </subcellularLocation>
</comment>
<comment type="domain">
    <text evidence="3">The central ion permeation pathway is formed by the first transmembrane domain from each of the five subunits. Mg(2+) binding strengthens interactions between subunits and leads to the formation of a symmetrical homopentamer surrounding a closed ion permeation pathway. Low Mg(2+) concentrations trigger both a conformation change within each subunit and a loosening of the interactions between subunits. This results in an open ion conduction pathway. In addition, this results in a less symmetrical shape of the whole complex.</text>
</comment>
<comment type="similarity">
    <text evidence="5">Belongs to the CorA metal ion transporter (MIT) (TC 1.A.35) family.</text>
</comment>
<sequence>MYNIFQLKNNHLFRINEKDKISFLNNIIWIDIIDSCGDGHNYIPNILLHQKIKFFELKDINKTTRFFKDKNGLHIHSFFFSYNSQEQIDNSSVFFTIHNGCLYTSRKKEFPVFCMYQKYLHNHLLINGNAYELLLNLFEVKLDDLTNKIEHIYATLETLSSVIMNGQQIDEYDHALSDLAILENIGWKIRVNLLDTERAIKFLIRKVKLPVSQQKYANDILNEITLLLPHNEYVFHQISSLTQSAMGFINIEQNRIIKIFSVIFLPPTLIASSYGMNFKFMPELQWSFGYPSAIILMILSGLAPYIYFKYKNWL</sequence>
<feature type="chain" id="PRO_0000239090" description="Magnesium transport protein CorA">
    <location>
        <begin position="1"/>
        <end position="314"/>
    </location>
</feature>
<feature type="transmembrane region" description="Helical" evidence="4">
    <location>
        <begin position="256"/>
        <end position="276"/>
    </location>
</feature>
<feature type="transmembrane region" description="Helical" evidence="4">
    <location>
        <begin position="288"/>
        <end position="308"/>
    </location>
</feature>
<feature type="short sequence motif" description="Probable selectivity filter" evidence="3">
    <location>
        <begin position="275"/>
        <end position="277"/>
    </location>
</feature>
<feature type="site" description="Essential for ion permeation" evidence="3">
    <location>
        <position position="254"/>
    </location>
</feature>
<gene>
    <name type="primary">corA</name>
    <name type="ordered locus">BPEN_597</name>
</gene>
<accession>Q491Z9</accession>
<proteinExistence type="inferred from homology"/>